<keyword id="KW-0204">Cytolysis</keyword>
<keyword id="KW-0903">Direct protein sequencing</keyword>
<keyword id="KW-0291">Formylation</keyword>
<keyword id="KW-0843">Virulence</keyword>
<proteinExistence type="evidence at protein level"/>
<organism>
    <name type="scientific">Staphylococcus aureus (strain MW2)</name>
    <dbReference type="NCBI Taxonomy" id="196620"/>
    <lineage>
        <taxon>Bacteria</taxon>
        <taxon>Bacillati</taxon>
        <taxon>Bacillota</taxon>
        <taxon>Bacilli</taxon>
        <taxon>Bacillales</taxon>
        <taxon>Staphylococcaceae</taxon>
        <taxon>Staphylococcus</taxon>
    </lineage>
</organism>
<accession>A9JX07</accession>
<protein>
    <recommendedName>
        <fullName>Phenol-soluble modulin alpha 3 peptide</fullName>
    </recommendedName>
</protein>
<dbReference type="EMBL" id="BA000033">
    <property type="status" value="NOT_ANNOTATED_CDS"/>
    <property type="molecule type" value="Genomic_DNA"/>
</dbReference>
<dbReference type="EMBL" id="BK006301">
    <property type="protein sequence ID" value="DAA06124.1"/>
    <property type="molecule type" value="Genomic_DNA"/>
</dbReference>
<dbReference type="RefSeq" id="WP_014373779.1">
    <property type="nucleotide sequence ID" value="NC_003923.1"/>
</dbReference>
<dbReference type="SMR" id="A9JX07"/>
<dbReference type="GO" id="GO:0031640">
    <property type="term" value="P:killing of cells of another organism"/>
    <property type="evidence" value="ECO:0007669"/>
    <property type="project" value="UniProtKB-KW"/>
</dbReference>
<dbReference type="InterPro" id="IPR031429">
    <property type="entry name" value="PSM_alpha"/>
</dbReference>
<dbReference type="InterPro" id="IPR053383">
    <property type="entry name" value="PSM_alpha_peptides"/>
</dbReference>
<dbReference type="NCBIfam" id="NF033426">
    <property type="entry name" value="PSM_alpha_3"/>
    <property type="match status" value="1"/>
</dbReference>
<dbReference type="Pfam" id="PF17063">
    <property type="entry name" value="PSMalpha"/>
    <property type="match status" value="1"/>
</dbReference>
<gene>
    <name type="primary">psmA3</name>
    <name type="ordered locus">MW0406.2</name>
</gene>
<evidence type="ECO:0000269" key="1">
    <source>
    </source>
</evidence>
<evidence type="ECO:0000305" key="2"/>
<feature type="peptide" id="PRO_0000345070" description="Phenol-soluble modulin alpha 3 peptide">
    <location>
        <begin position="1"/>
        <end position="22"/>
    </location>
</feature>
<feature type="modified residue" description="N-formylmethionine" evidence="1">
    <location>
        <position position="1"/>
    </location>
</feature>
<name>PSMA3_STAAW</name>
<sequence>MEFVAKLFKFFKDLLGKFLGNN</sequence>
<reference key="1">
    <citation type="journal article" date="2002" name="Lancet">
        <title>Genome and virulence determinants of high virulence community-acquired MRSA.</title>
        <authorList>
            <person name="Baba T."/>
            <person name="Takeuchi F."/>
            <person name="Kuroda M."/>
            <person name="Yuzawa H."/>
            <person name="Aoki K."/>
            <person name="Oguchi A."/>
            <person name="Nagai Y."/>
            <person name="Iwama N."/>
            <person name="Asano K."/>
            <person name="Naimi T."/>
            <person name="Kuroda H."/>
            <person name="Cui L."/>
            <person name="Yamamoto K."/>
            <person name="Hiramatsu K."/>
        </authorList>
    </citation>
    <scope>NUCLEOTIDE SEQUENCE [LARGE SCALE GENOMIC DNA]</scope>
    <source>
        <strain>MW2</strain>
    </source>
</reference>
<reference key="2">
    <citation type="journal article" date="2007" name="Nat. Med.">
        <title>Identification of novel cytolytic peptides as key virulence determinants for community-associated MRSA.</title>
        <authorList>
            <person name="Wang R."/>
            <person name="Braughton K.R."/>
            <person name="Kretschmer D."/>
            <person name="Bach T.-H.L."/>
            <person name="Queck S.Y."/>
            <person name="Li M."/>
            <person name="Kennedy A.D."/>
            <person name="Dorward D.W."/>
            <person name="Klebanoff S.J."/>
            <person name="Peschel A."/>
            <person name="DeLeo F.R."/>
            <person name="Otto M."/>
        </authorList>
    </citation>
    <scope>PARTIAL PROTEIN SEQUENCE</scope>
    <scope>FORMYLATION AT MET-1</scope>
    <scope>FUNCTION AS A VIRULENCE FACTOR</scope>
    <scope>IDENTIFICATION BY MASS SPECTROMETRY</scope>
    <scope>INDUCTION BY AGR</scope>
</reference>
<comment type="function">
    <text evidence="1">Peptide which can recruit, activate and subsequently lyse human neutrophils, thus eliminating the main cellular defense against infection. Stimulates the secretion of the chemotactic factor interleukin-8 (IL-8). Showed the most pronounced pro-inflammatory and cytolytic activities in the host, thus contributing greatly to virulence and possibly to the development of disease.</text>
</comment>
<comment type="induction">
    <text evidence="1">Up-regulated by agr.</text>
</comment>
<comment type="miscellaneous">
    <text>Peptide production is higher in most prevalent community-associated MRSA strains than in hospital-associated MRSA strains.</text>
</comment>
<comment type="similarity">
    <text evidence="2">Belongs to the phenol-soluble modulin alpha peptides family.</text>
</comment>